<accession>B5QTH3</accession>
<keyword id="KW-0067">ATP-binding</keyword>
<keyword id="KW-0963">Cytoplasm</keyword>
<keyword id="KW-1015">Disulfide bond</keyword>
<keyword id="KW-0547">Nucleotide-binding</keyword>
<keyword id="KW-0676">Redox-active center</keyword>
<keyword id="KW-0694">RNA-binding</keyword>
<keyword id="KW-0784">Thiamine biosynthesis</keyword>
<keyword id="KW-0808">Transferase</keyword>
<keyword id="KW-0820">tRNA-binding</keyword>
<gene>
    <name evidence="1" type="primary">thiI</name>
    <name type="ordered locus">SEN0407</name>
</gene>
<name>THII_SALEP</name>
<comment type="function">
    <text evidence="1">Catalyzes the ATP-dependent transfer of a sulfur to tRNA to produce 4-thiouridine in position 8 of tRNAs, which functions as a near-UV photosensor. Also catalyzes the transfer of sulfur to the sulfur carrier protein ThiS, forming ThiS-thiocarboxylate. This is a step in the synthesis of thiazole, in the thiamine biosynthesis pathway. The sulfur is donated as persulfide by IscS.</text>
</comment>
<comment type="catalytic activity">
    <reaction evidence="1">
        <text>[ThiI sulfur-carrier protein]-S-sulfanyl-L-cysteine + a uridine in tRNA + 2 reduced [2Fe-2S]-[ferredoxin] + ATP + H(+) = [ThiI sulfur-carrier protein]-L-cysteine + a 4-thiouridine in tRNA + 2 oxidized [2Fe-2S]-[ferredoxin] + AMP + diphosphate</text>
        <dbReference type="Rhea" id="RHEA:24176"/>
        <dbReference type="Rhea" id="RHEA-COMP:10000"/>
        <dbReference type="Rhea" id="RHEA-COMP:10001"/>
        <dbReference type="Rhea" id="RHEA-COMP:13337"/>
        <dbReference type="Rhea" id="RHEA-COMP:13338"/>
        <dbReference type="Rhea" id="RHEA-COMP:13339"/>
        <dbReference type="Rhea" id="RHEA-COMP:13340"/>
        <dbReference type="ChEBI" id="CHEBI:15378"/>
        <dbReference type="ChEBI" id="CHEBI:29950"/>
        <dbReference type="ChEBI" id="CHEBI:30616"/>
        <dbReference type="ChEBI" id="CHEBI:33019"/>
        <dbReference type="ChEBI" id="CHEBI:33737"/>
        <dbReference type="ChEBI" id="CHEBI:33738"/>
        <dbReference type="ChEBI" id="CHEBI:61963"/>
        <dbReference type="ChEBI" id="CHEBI:65315"/>
        <dbReference type="ChEBI" id="CHEBI:136798"/>
        <dbReference type="ChEBI" id="CHEBI:456215"/>
        <dbReference type="EC" id="2.8.1.4"/>
    </reaction>
</comment>
<comment type="catalytic activity">
    <reaction evidence="1">
        <text>[ThiS sulfur-carrier protein]-C-terminal Gly-Gly-AMP + S-sulfanyl-L-cysteinyl-[cysteine desulfurase] + AH2 = [ThiS sulfur-carrier protein]-C-terminal-Gly-aminoethanethioate + L-cysteinyl-[cysteine desulfurase] + A + AMP + 2 H(+)</text>
        <dbReference type="Rhea" id="RHEA:43340"/>
        <dbReference type="Rhea" id="RHEA-COMP:12157"/>
        <dbReference type="Rhea" id="RHEA-COMP:12158"/>
        <dbReference type="Rhea" id="RHEA-COMP:12910"/>
        <dbReference type="Rhea" id="RHEA-COMP:19908"/>
        <dbReference type="ChEBI" id="CHEBI:13193"/>
        <dbReference type="ChEBI" id="CHEBI:15378"/>
        <dbReference type="ChEBI" id="CHEBI:17499"/>
        <dbReference type="ChEBI" id="CHEBI:29950"/>
        <dbReference type="ChEBI" id="CHEBI:61963"/>
        <dbReference type="ChEBI" id="CHEBI:90618"/>
        <dbReference type="ChEBI" id="CHEBI:232372"/>
        <dbReference type="ChEBI" id="CHEBI:456215"/>
    </reaction>
</comment>
<comment type="pathway">
    <text evidence="1">Cofactor biosynthesis; thiamine diphosphate biosynthesis.</text>
</comment>
<comment type="subcellular location">
    <subcellularLocation>
        <location evidence="1">Cytoplasm</location>
    </subcellularLocation>
</comment>
<comment type="similarity">
    <text evidence="1">Belongs to the ThiI family.</text>
</comment>
<protein>
    <recommendedName>
        <fullName evidence="1">tRNA sulfurtransferase</fullName>
        <ecNumber evidence="1">2.8.1.4</ecNumber>
    </recommendedName>
    <alternativeName>
        <fullName evidence="1">Sulfur carrier protein ThiS sulfurtransferase</fullName>
    </alternativeName>
    <alternativeName>
        <fullName evidence="1">Thiamine biosynthesis protein ThiI</fullName>
    </alternativeName>
    <alternativeName>
        <fullName evidence="1">tRNA 4-thiouridine synthase</fullName>
    </alternativeName>
</protein>
<dbReference type="EC" id="2.8.1.4" evidence="1"/>
<dbReference type="EMBL" id="AM933172">
    <property type="protein sequence ID" value="CAR31993.1"/>
    <property type="molecule type" value="Genomic_DNA"/>
</dbReference>
<dbReference type="RefSeq" id="WP_000668652.1">
    <property type="nucleotide sequence ID" value="NC_011294.1"/>
</dbReference>
<dbReference type="SMR" id="B5QTH3"/>
<dbReference type="KEGG" id="set:SEN0407"/>
<dbReference type="HOGENOM" id="CLU_037952_4_1_6"/>
<dbReference type="UniPathway" id="UPA00060"/>
<dbReference type="Proteomes" id="UP000000613">
    <property type="component" value="Chromosome"/>
</dbReference>
<dbReference type="GO" id="GO:0005829">
    <property type="term" value="C:cytosol"/>
    <property type="evidence" value="ECO:0007669"/>
    <property type="project" value="TreeGrafter"/>
</dbReference>
<dbReference type="GO" id="GO:0005524">
    <property type="term" value="F:ATP binding"/>
    <property type="evidence" value="ECO:0007669"/>
    <property type="project" value="UniProtKB-UniRule"/>
</dbReference>
<dbReference type="GO" id="GO:0004810">
    <property type="term" value="F:CCA tRNA nucleotidyltransferase activity"/>
    <property type="evidence" value="ECO:0007669"/>
    <property type="project" value="InterPro"/>
</dbReference>
<dbReference type="GO" id="GO:0000049">
    <property type="term" value="F:tRNA binding"/>
    <property type="evidence" value="ECO:0007669"/>
    <property type="project" value="UniProtKB-UniRule"/>
</dbReference>
<dbReference type="GO" id="GO:0140741">
    <property type="term" value="F:tRNA-uracil-4 sulfurtransferase activity"/>
    <property type="evidence" value="ECO:0007669"/>
    <property type="project" value="UniProtKB-EC"/>
</dbReference>
<dbReference type="GO" id="GO:0009228">
    <property type="term" value="P:thiamine biosynthetic process"/>
    <property type="evidence" value="ECO:0007669"/>
    <property type="project" value="UniProtKB-KW"/>
</dbReference>
<dbReference type="GO" id="GO:0009229">
    <property type="term" value="P:thiamine diphosphate biosynthetic process"/>
    <property type="evidence" value="ECO:0007669"/>
    <property type="project" value="UniProtKB-UniRule"/>
</dbReference>
<dbReference type="GO" id="GO:0052837">
    <property type="term" value="P:thiazole biosynthetic process"/>
    <property type="evidence" value="ECO:0007669"/>
    <property type="project" value="InterPro"/>
</dbReference>
<dbReference type="GO" id="GO:0002937">
    <property type="term" value="P:tRNA 4-thiouridine biosynthesis"/>
    <property type="evidence" value="ECO:0007669"/>
    <property type="project" value="TreeGrafter"/>
</dbReference>
<dbReference type="CDD" id="cd01712">
    <property type="entry name" value="PPase_ThiI"/>
    <property type="match status" value="1"/>
</dbReference>
<dbReference type="CDD" id="cd00158">
    <property type="entry name" value="RHOD"/>
    <property type="match status" value="1"/>
</dbReference>
<dbReference type="CDD" id="cd11716">
    <property type="entry name" value="THUMP_ThiI"/>
    <property type="match status" value="1"/>
</dbReference>
<dbReference type="FunFam" id="3.30.2130.30:FF:000002">
    <property type="entry name" value="tRNA sulfurtransferase"/>
    <property type="match status" value="1"/>
</dbReference>
<dbReference type="FunFam" id="3.40.250.10:FF:000003">
    <property type="entry name" value="tRNA sulfurtransferase"/>
    <property type="match status" value="1"/>
</dbReference>
<dbReference type="FunFam" id="3.40.50.620:FF:000029">
    <property type="entry name" value="tRNA sulfurtransferase"/>
    <property type="match status" value="1"/>
</dbReference>
<dbReference type="Gene3D" id="3.30.2130.30">
    <property type="match status" value="1"/>
</dbReference>
<dbReference type="Gene3D" id="3.40.50.620">
    <property type="entry name" value="HUPs"/>
    <property type="match status" value="1"/>
</dbReference>
<dbReference type="Gene3D" id="3.40.250.10">
    <property type="entry name" value="Rhodanese-like domain"/>
    <property type="match status" value="1"/>
</dbReference>
<dbReference type="HAMAP" id="MF_00021">
    <property type="entry name" value="ThiI"/>
    <property type="match status" value="1"/>
</dbReference>
<dbReference type="InterPro" id="IPR001763">
    <property type="entry name" value="Rhodanese-like_dom"/>
</dbReference>
<dbReference type="InterPro" id="IPR036873">
    <property type="entry name" value="Rhodanese-like_dom_sf"/>
</dbReference>
<dbReference type="InterPro" id="IPR014729">
    <property type="entry name" value="Rossmann-like_a/b/a_fold"/>
</dbReference>
<dbReference type="InterPro" id="IPR020536">
    <property type="entry name" value="ThiI_AANH"/>
</dbReference>
<dbReference type="InterPro" id="IPR054173">
    <property type="entry name" value="ThiI_fer"/>
</dbReference>
<dbReference type="InterPro" id="IPR049961">
    <property type="entry name" value="ThiI_N"/>
</dbReference>
<dbReference type="InterPro" id="IPR026340">
    <property type="entry name" value="THII_Thiazole_biosynth_dom"/>
</dbReference>
<dbReference type="InterPro" id="IPR004114">
    <property type="entry name" value="THUMP_dom"/>
</dbReference>
<dbReference type="InterPro" id="IPR049962">
    <property type="entry name" value="THUMP_ThiI"/>
</dbReference>
<dbReference type="InterPro" id="IPR003720">
    <property type="entry name" value="tRNA_STrfase"/>
</dbReference>
<dbReference type="InterPro" id="IPR050102">
    <property type="entry name" value="tRNA_sulfurtransferase_ThiI"/>
</dbReference>
<dbReference type="NCBIfam" id="TIGR04271">
    <property type="entry name" value="ThiI_C_thiazole"/>
    <property type="match status" value="1"/>
</dbReference>
<dbReference type="NCBIfam" id="TIGR00342">
    <property type="entry name" value="tRNA uracil 4-sulfurtransferase ThiI"/>
    <property type="match status" value="1"/>
</dbReference>
<dbReference type="PANTHER" id="PTHR43209">
    <property type="entry name" value="TRNA SULFURTRANSFERASE"/>
    <property type="match status" value="1"/>
</dbReference>
<dbReference type="PANTHER" id="PTHR43209:SF1">
    <property type="entry name" value="TRNA SULFURTRANSFERASE"/>
    <property type="match status" value="1"/>
</dbReference>
<dbReference type="Pfam" id="PF02568">
    <property type="entry name" value="ThiI"/>
    <property type="match status" value="1"/>
</dbReference>
<dbReference type="Pfam" id="PF22025">
    <property type="entry name" value="ThiI_fer"/>
    <property type="match status" value="1"/>
</dbReference>
<dbReference type="Pfam" id="PF02926">
    <property type="entry name" value="THUMP"/>
    <property type="match status" value="1"/>
</dbReference>
<dbReference type="SMART" id="SM00981">
    <property type="entry name" value="THUMP"/>
    <property type="match status" value="1"/>
</dbReference>
<dbReference type="SUPFAM" id="SSF52402">
    <property type="entry name" value="Adenine nucleotide alpha hydrolases-like"/>
    <property type="match status" value="1"/>
</dbReference>
<dbReference type="SUPFAM" id="SSF52821">
    <property type="entry name" value="Rhodanese/Cell cycle control phosphatase"/>
    <property type="match status" value="1"/>
</dbReference>
<dbReference type="SUPFAM" id="SSF143437">
    <property type="entry name" value="THUMP domain-like"/>
    <property type="match status" value="1"/>
</dbReference>
<dbReference type="PROSITE" id="PS50206">
    <property type="entry name" value="RHODANESE_3"/>
    <property type="match status" value="1"/>
</dbReference>
<dbReference type="PROSITE" id="PS51165">
    <property type="entry name" value="THUMP"/>
    <property type="match status" value="1"/>
</dbReference>
<sequence>MKFIIKLFPEITIKSQSVRLRFIKILTGNIRNVLKHYDETLAVVRHWDNIEVRAKDENQRLAIRDALTRIPGIHHILEVEDVPFTDMHDIFEKALAQYREQLEGKTFCVRVKRRGKHEFSSIEVERYVGGGLNQHIESARVKLTNPDVTVHLEVEDDRLLLIKGRYEGIGGFPIGTQEDVLSLISGGFDSGVSSYMLMRRGCRVHYCFFNLGGAAHEIGVRQVAHYLWNRFGSSHRVRFVAINFEPVVGEILEKVDDGQMGVVLKRMMVRAASKVAERYGVQALVTGEALGQVSSQTLTNLRLIDNVSDTLILRPLISYDKEHIINLARQIGTEDFARTMPEYCGVISKSPTVKAIKAKIEAEEENFDFSILDKVVEEANNVDIREIAQQTQQEVVEVETVSGFGPNDVILDIRSVDEQDDKPLKVEGVDVVSLPFYKLSTKFGDLDQSKTWLLWCERGVMSRLQALYLREQGFENVKVYRP</sequence>
<proteinExistence type="inferred from homology"/>
<reference key="1">
    <citation type="journal article" date="2008" name="Genome Res.">
        <title>Comparative genome analysis of Salmonella enteritidis PT4 and Salmonella gallinarum 287/91 provides insights into evolutionary and host adaptation pathways.</title>
        <authorList>
            <person name="Thomson N.R."/>
            <person name="Clayton D.J."/>
            <person name="Windhorst D."/>
            <person name="Vernikos G."/>
            <person name="Davidson S."/>
            <person name="Churcher C."/>
            <person name="Quail M.A."/>
            <person name="Stevens M."/>
            <person name="Jones M.A."/>
            <person name="Watson M."/>
            <person name="Barron A."/>
            <person name="Layton A."/>
            <person name="Pickard D."/>
            <person name="Kingsley R.A."/>
            <person name="Bignell A."/>
            <person name="Clark L."/>
            <person name="Harris B."/>
            <person name="Ormond D."/>
            <person name="Abdellah Z."/>
            <person name="Brooks K."/>
            <person name="Cherevach I."/>
            <person name="Chillingworth T."/>
            <person name="Woodward J."/>
            <person name="Norberczak H."/>
            <person name="Lord A."/>
            <person name="Arrowsmith C."/>
            <person name="Jagels K."/>
            <person name="Moule S."/>
            <person name="Mungall K."/>
            <person name="Saunders M."/>
            <person name="Whitehead S."/>
            <person name="Chabalgoity J.A."/>
            <person name="Maskell D."/>
            <person name="Humphreys T."/>
            <person name="Roberts M."/>
            <person name="Barrow P.A."/>
            <person name="Dougan G."/>
            <person name="Parkhill J."/>
        </authorList>
    </citation>
    <scope>NUCLEOTIDE SEQUENCE [LARGE SCALE GENOMIC DNA]</scope>
    <source>
        <strain>P125109</strain>
    </source>
</reference>
<evidence type="ECO:0000255" key="1">
    <source>
        <dbReference type="HAMAP-Rule" id="MF_00021"/>
    </source>
</evidence>
<organism>
    <name type="scientific">Salmonella enteritidis PT4 (strain P125109)</name>
    <dbReference type="NCBI Taxonomy" id="550537"/>
    <lineage>
        <taxon>Bacteria</taxon>
        <taxon>Pseudomonadati</taxon>
        <taxon>Pseudomonadota</taxon>
        <taxon>Gammaproteobacteria</taxon>
        <taxon>Enterobacterales</taxon>
        <taxon>Enterobacteriaceae</taxon>
        <taxon>Salmonella</taxon>
    </lineage>
</organism>
<feature type="chain" id="PRO_1000090029" description="tRNA sulfurtransferase">
    <location>
        <begin position="1"/>
        <end position="482"/>
    </location>
</feature>
<feature type="domain" description="THUMP" evidence="1">
    <location>
        <begin position="61"/>
        <end position="165"/>
    </location>
</feature>
<feature type="domain" description="Rhodanese" evidence="1">
    <location>
        <begin position="404"/>
        <end position="482"/>
    </location>
</feature>
<feature type="active site" description="Cysteine persulfide intermediate" evidence="1">
    <location>
        <position position="456"/>
    </location>
</feature>
<feature type="binding site" evidence="1">
    <location>
        <begin position="183"/>
        <end position="184"/>
    </location>
    <ligand>
        <name>ATP</name>
        <dbReference type="ChEBI" id="CHEBI:30616"/>
    </ligand>
</feature>
<feature type="binding site" evidence="1">
    <location>
        <position position="265"/>
    </location>
    <ligand>
        <name>ATP</name>
        <dbReference type="ChEBI" id="CHEBI:30616"/>
    </ligand>
</feature>
<feature type="binding site" evidence="1">
    <location>
        <position position="287"/>
    </location>
    <ligand>
        <name>ATP</name>
        <dbReference type="ChEBI" id="CHEBI:30616"/>
    </ligand>
</feature>
<feature type="binding site" evidence="1">
    <location>
        <position position="296"/>
    </location>
    <ligand>
        <name>ATP</name>
        <dbReference type="ChEBI" id="CHEBI:30616"/>
    </ligand>
</feature>
<feature type="disulfide bond" description="Redox-active" evidence="1">
    <location>
        <begin position="344"/>
        <end position="456"/>
    </location>
</feature>